<organism>
    <name type="scientific">Shewanella loihica (strain ATCC BAA-1088 / PV-4)</name>
    <dbReference type="NCBI Taxonomy" id="323850"/>
    <lineage>
        <taxon>Bacteria</taxon>
        <taxon>Pseudomonadati</taxon>
        <taxon>Pseudomonadota</taxon>
        <taxon>Gammaproteobacteria</taxon>
        <taxon>Alteromonadales</taxon>
        <taxon>Shewanellaceae</taxon>
        <taxon>Shewanella</taxon>
    </lineage>
</organism>
<sequence>MPFTFKQFHVDDSHCGMPVSTDGVLLGAWAPLTQAKTILDIGAGSGLLSLMAAQRSEAVIQALEIDPLAAQDCQHNIDQSPWSDRITLIQADLLQWYPLAQTQAQTQFDHILCNPPYFDNGPQSQCSKRAQARHTDSLAFDQLLSAIKQLLAPTGKASLILPNASLGRFLPLLAEFKLKLSARVDITTAPNKAPQRHLLCLSHAVSSAESSEAIEAEHLSIRDASGAYSQAMVALTQAFYLKL</sequence>
<accession>A3QAZ2</accession>
<comment type="function">
    <text evidence="1">Specifically methylates the adenine in position 37 of tRNA(1)(Val) (anticodon cmo5UAC).</text>
</comment>
<comment type="catalytic activity">
    <reaction evidence="1">
        <text>adenosine(37) in tRNA1(Val) + S-adenosyl-L-methionine = N(6)-methyladenosine(37) in tRNA1(Val) + S-adenosyl-L-homocysteine + H(+)</text>
        <dbReference type="Rhea" id="RHEA:43160"/>
        <dbReference type="Rhea" id="RHEA-COMP:10369"/>
        <dbReference type="Rhea" id="RHEA-COMP:10370"/>
        <dbReference type="ChEBI" id="CHEBI:15378"/>
        <dbReference type="ChEBI" id="CHEBI:57856"/>
        <dbReference type="ChEBI" id="CHEBI:59789"/>
        <dbReference type="ChEBI" id="CHEBI:74411"/>
        <dbReference type="ChEBI" id="CHEBI:74449"/>
        <dbReference type="EC" id="2.1.1.223"/>
    </reaction>
</comment>
<comment type="subcellular location">
    <subcellularLocation>
        <location evidence="1">Cytoplasm</location>
    </subcellularLocation>
</comment>
<comment type="similarity">
    <text evidence="1">Belongs to the methyltransferase superfamily. tRNA (adenine-N(6)-)-methyltransferase family.</text>
</comment>
<dbReference type="EC" id="2.1.1.223" evidence="1"/>
<dbReference type="EMBL" id="CP000606">
    <property type="protein sequence ID" value="ABO22640.1"/>
    <property type="molecule type" value="Genomic_DNA"/>
</dbReference>
<dbReference type="RefSeq" id="WP_011864574.1">
    <property type="nucleotide sequence ID" value="NC_009092.1"/>
</dbReference>
<dbReference type="SMR" id="A3QAZ2"/>
<dbReference type="STRING" id="323850.Shew_0768"/>
<dbReference type="KEGG" id="slo:Shew_0768"/>
<dbReference type="eggNOG" id="COG4123">
    <property type="taxonomic scope" value="Bacteria"/>
</dbReference>
<dbReference type="HOGENOM" id="CLU_061983_0_0_6"/>
<dbReference type="OrthoDB" id="5383291at2"/>
<dbReference type="Proteomes" id="UP000001558">
    <property type="component" value="Chromosome"/>
</dbReference>
<dbReference type="GO" id="GO:0005737">
    <property type="term" value="C:cytoplasm"/>
    <property type="evidence" value="ECO:0007669"/>
    <property type="project" value="UniProtKB-SubCell"/>
</dbReference>
<dbReference type="GO" id="GO:0003676">
    <property type="term" value="F:nucleic acid binding"/>
    <property type="evidence" value="ECO:0007669"/>
    <property type="project" value="InterPro"/>
</dbReference>
<dbReference type="GO" id="GO:0000179">
    <property type="term" value="F:rRNA (adenine-N6,N6-)-dimethyltransferase activity"/>
    <property type="evidence" value="ECO:0007669"/>
    <property type="project" value="InterPro"/>
</dbReference>
<dbReference type="GO" id="GO:0016430">
    <property type="term" value="F:tRNA (adenine-N6)-methyltransferase activity"/>
    <property type="evidence" value="ECO:0007669"/>
    <property type="project" value="UniProtKB-UniRule"/>
</dbReference>
<dbReference type="GO" id="GO:0008033">
    <property type="term" value="P:tRNA processing"/>
    <property type="evidence" value="ECO:0007669"/>
    <property type="project" value="UniProtKB-UniRule"/>
</dbReference>
<dbReference type="CDD" id="cd02440">
    <property type="entry name" value="AdoMet_MTases"/>
    <property type="match status" value="1"/>
</dbReference>
<dbReference type="Gene3D" id="3.40.50.150">
    <property type="entry name" value="Vaccinia Virus protein VP39"/>
    <property type="match status" value="1"/>
</dbReference>
<dbReference type="HAMAP" id="MF_01872">
    <property type="entry name" value="tRNA_methyltr_YfiC"/>
    <property type="match status" value="1"/>
</dbReference>
<dbReference type="InterPro" id="IPR002052">
    <property type="entry name" value="DNA_methylase_N6_adenine_CS"/>
</dbReference>
<dbReference type="InterPro" id="IPR020596">
    <property type="entry name" value="rRNA_Ade_Mease_Trfase_CS"/>
</dbReference>
<dbReference type="InterPro" id="IPR029063">
    <property type="entry name" value="SAM-dependent_MTases_sf"/>
</dbReference>
<dbReference type="InterPro" id="IPR007848">
    <property type="entry name" value="Small_mtfrase_dom"/>
</dbReference>
<dbReference type="InterPro" id="IPR050210">
    <property type="entry name" value="tRNA_Adenine-N(6)_MTase"/>
</dbReference>
<dbReference type="InterPro" id="IPR022882">
    <property type="entry name" value="tRNA_adenine-N6_MeTrfase"/>
</dbReference>
<dbReference type="PANTHER" id="PTHR47739">
    <property type="entry name" value="TRNA1(VAL) (ADENINE(37)-N6)-METHYLTRANSFERASE"/>
    <property type="match status" value="1"/>
</dbReference>
<dbReference type="PANTHER" id="PTHR47739:SF1">
    <property type="entry name" value="TRNA1(VAL) (ADENINE(37)-N6)-METHYLTRANSFERASE"/>
    <property type="match status" value="1"/>
</dbReference>
<dbReference type="Pfam" id="PF05175">
    <property type="entry name" value="MTS"/>
    <property type="match status" value="1"/>
</dbReference>
<dbReference type="PRINTS" id="PR00507">
    <property type="entry name" value="N12N6MTFRASE"/>
</dbReference>
<dbReference type="SUPFAM" id="SSF53335">
    <property type="entry name" value="S-adenosyl-L-methionine-dependent methyltransferases"/>
    <property type="match status" value="1"/>
</dbReference>
<dbReference type="PROSITE" id="PS00092">
    <property type="entry name" value="N6_MTASE"/>
    <property type="match status" value="1"/>
</dbReference>
<keyword id="KW-0963">Cytoplasm</keyword>
<keyword id="KW-0489">Methyltransferase</keyword>
<keyword id="KW-1185">Reference proteome</keyword>
<keyword id="KW-0949">S-adenosyl-L-methionine</keyword>
<keyword id="KW-0808">Transferase</keyword>
<keyword id="KW-0819">tRNA processing</keyword>
<gene>
    <name type="ordered locus">Shew_0768</name>
</gene>
<reference key="1">
    <citation type="submission" date="2007-03" db="EMBL/GenBank/DDBJ databases">
        <title>Complete sequence of Shewanella loihica PV-4.</title>
        <authorList>
            <consortium name="US DOE Joint Genome Institute"/>
            <person name="Copeland A."/>
            <person name="Lucas S."/>
            <person name="Lapidus A."/>
            <person name="Barry K."/>
            <person name="Detter J.C."/>
            <person name="Glavina del Rio T."/>
            <person name="Hammon N."/>
            <person name="Israni S."/>
            <person name="Dalin E."/>
            <person name="Tice H."/>
            <person name="Pitluck S."/>
            <person name="Chain P."/>
            <person name="Malfatti S."/>
            <person name="Shin M."/>
            <person name="Vergez L."/>
            <person name="Schmutz J."/>
            <person name="Larimer F."/>
            <person name="Land M."/>
            <person name="Hauser L."/>
            <person name="Kyrpides N."/>
            <person name="Mikhailova N."/>
            <person name="Romine M.F."/>
            <person name="Serres G."/>
            <person name="Fredrickson J."/>
            <person name="Tiedje J."/>
            <person name="Richardson P."/>
        </authorList>
    </citation>
    <scope>NUCLEOTIDE SEQUENCE [LARGE SCALE GENOMIC DNA]</scope>
    <source>
        <strain>ATCC BAA-1088 / PV-4</strain>
    </source>
</reference>
<name>TRMN6_SHELP</name>
<evidence type="ECO:0000255" key="1">
    <source>
        <dbReference type="HAMAP-Rule" id="MF_01872"/>
    </source>
</evidence>
<feature type="chain" id="PRO_0000387422" description="tRNA1(Val) (adenine(37)-N6)-methyltransferase">
    <location>
        <begin position="1"/>
        <end position="243"/>
    </location>
</feature>
<proteinExistence type="inferred from homology"/>
<protein>
    <recommendedName>
        <fullName evidence="1">tRNA1(Val) (adenine(37)-N6)-methyltransferase</fullName>
        <ecNumber evidence="1">2.1.1.223</ecNumber>
    </recommendedName>
    <alternativeName>
        <fullName evidence="1">tRNA m6A37 methyltransferase</fullName>
    </alternativeName>
</protein>